<name>YDNAA_RICMO</name>
<dbReference type="EMBL" id="AJ293315">
    <property type="protein sequence ID" value="CAC33611.1"/>
    <property type="molecule type" value="Genomic_DNA"/>
</dbReference>
<dbReference type="SMR" id="P0A3K3"/>
<dbReference type="OMA" id="NGWRFRG"/>
<dbReference type="CDD" id="cd01522">
    <property type="entry name" value="RHOD_1"/>
    <property type="match status" value="1"/>
</dbReference>
<dbReference type="Gene3D" id="3.40.250.10">
    <property type="entry name" value="Rhodanese-like domain"/>
    <property type="match status" value="1"/>
</dbReference>
<dbReference type="InterPro" id="IPR001763">
    <property type="entry name" value="Rhodanese-like_dom"/>
</dbReference>
<dbReference type="InterPro" id="IPR036873">
    <property type="entry name" value="Rhodanese-like_dom_sf"/>
</dbReference>
<dbReference type="InterPro" id="IPR044240">
    <property type="entry name" value="STR4-like"/>
</dbReference>
<dbReference type="PANTHER" id="PTHR47377">
    <property type="entry name" value="RHODANESE-LIKE DOMAIN-CONTAINING PROTEIN 4, CHLOROPLASTIC"/>
    <property type="match status" value="1"/>
</dbReference>
<dbReference type="PANTHER" id="PTHR47377:SF1">
    <property type="entry name" value="RHODANESE-LIKE DOMAIN-CONTAINING PROTEIN 4, CHLOROPLASTIC"/>
    <property type="match status" value="1"/>
</dbReference>
<dbReference type="Pfam" id="PF00581">
    <property type="entry name" value="Rhodanese"/>
    <property type="match status" value="1"/>
</dbReference>
<dbReference type="SMART" id="SM00450">
    <property type="entry name" value="RHOD"/>
    <property type="match status" value="1"/>
</dbReference>
<dbReference type="SUPFAM" id="SSF52821">
    <property type="entry name" value="Rhodanese/Cell cycle control phosphatase"/>
    <property type="match status" value="1"/>
</dbReference>
<dbReference type="PROSITE" id="PS50206">
    <property type="entry name" value="RHODANESE_3"/>
    <property type="match status" value="1"/>
</dbReference>
<feature type="chain" id="PRO_0000101404" description="Uncharacterized protein in dnaA 5'region">
    <location>
        <begin position="1"/>
        <end position="123"/>
    </location>
</feature>
<feature type="domain" description="Rhodanese" evidence="1">
    <location>
        <begin position="17"/>
        <end position="117"/>
    </location>
</feature>
<protein>
    <recommendedName>
        <fullName>Uncharacterized protein in dnaA 5'region</fullName>
    </recommendedName>
</protein>
<organism>
    <name type="scientific">Rickettsia montanensis</name>
    <dbReference type="NCBI Taxonomy" id="33991"/>
    <lineage>
        <taxon>Bacteria</taxon>
        <taxon>Pseudomonadati</taxon>
        <taxon>Pseudomonadota</taxon>
        <taxon>Alphaproteobacteria</taxon>
        <taxon>Rickettsiales</taxon>
        <taxon>Rickettsiaceae</taxon>
        <taxon>Rickettsieae</taxon>
        <taxon>Rickettsia</taxon>
        <taxon>spotted fever group</taxon>
    </lineage>
</organism>
<reference key="1">
    <citation type="journal article" date="2001" name="Mol. Biol. Evol.">
        <title>Pseudogenes, junk DNA, and the dynamics of Rickettsia genomes.</title>
        <authorList>
            <person name="Andersson J.O."/>
            <person name="Andersson S.G.E."/>
        </authorList>
    </citation>
    <scope>NUCLEOTIDE SEQUENCE [GENOMIC DNA]</scope>
</reference>
<evidence type="ECO:0000255" key="1">
    <source>
        <dbReference type="PROSITE-ProRule" id="PRU00173"/>
    </source>
</evidence>
<proteinExistence type="predicted"/>
<accession>P0A3K3</accession>
<accession>Q9AKN7</accession>
<sequence>MSVQNICSTKAYDMLISNDNAFLVDVRTREEWQQVGIPHLDNKNKVIFLSWQLNKDFEDNFLSIVNDKIHAIIFFLCRSGYRSFIAANFITNIGYKNCYNISDGFEGNNQDKGWKQNNLPWQF</sequence>